<comment type="function">
    <text evidence="3 4">Involved in cell wall biogenesis. Has a role in the addition of Gal-beta1,3 moeities to galactomannans and their subsequent pyruvylation. Has a role in meiosis.</text>
</comment>
<comment type="subcellular location">
    <subcellularLocation>
        <location evidence="1">Golgi apparatus membrane</location>
        <topology evidence="1">Single-pass type II membrane protein</topology>
    </subcellularLocation>
</comment>
<accession>Q9UUJ0</accession>
<name>PVG5_SCHPO</name>
<organism>
    <name type="scientific">Schizosaccharomyces pombe (strain 972 / ATCC 24843)</name>
    <name type="common">Fission yeast</name>
    <dbReference type="NCBI Taxonomy" id="284812"/>
    <lineage>
        <taxon>Eukaryota</taxon>
        <taxon>Fungi</taxon>
        <taxon>Dikarya</taxon>
        <taxon>Ascomycota</taxon>
        <taxon>Taphrinomycotina</taxon>
        <taxon>Schizosaccharomycetes</taxon>
        <taxon>Schizosaccharomycetales</taxon>
        <taxon>Schizosaccharomycetaceae</taxon>
        <taxon>Schizosaccharomyces</taxon>
    </lineage>
</organism>
<sequence>MGLPLRIFAGNGIGGWCLRLFLFGSLILLLRPLIFYSNTTMKKLKTEYPIYHRHLSALKRNFYYTMDAQLGGIRNVVLINRPCFAASDNFLTLMGQNWYLKERNINVLSDICFPLSNNAHDSLPTFNNGSDLFNPLYFAVLNAATPARFTFHLFNHVMDSVVPFDEAKKFKVRSFPINYAEYADDECQLALKKIRPIPDKYLVSTRVLSDSRYLELSGAVVAFAPDASSSLLFELADIKQHKKTSADILIFLSKDHNLPVSFYDNYKLKYTLHFWQPPSFPDSSTIDDQAKLLFDYVVSQVVKYPYFVTDIYQIHLLGVYLNLKHVYLLENDDVEDAYYERQWMQAFQRKNVVAVAEELQTALRIIEQWKQL</sequence>
<dbReference type="EMBL" id="CU329670">
    <property type="protein sequence ID" value="CAB52712.1"/>
    <property type="molecule type" value="Genomic_DNA"/>
</dbReference>
<dbReference type="PIR" id="T38192">
    <property type="entry name" value="T38192"/>
</dbReference>
<dbReference type="RefSeq" id="NP_594725.1">
    <property type="nucleotide sequence ID" value="NM_001020153.1"/>
</dbReference>
<dbReference type="SMR" id="Q9UUJ0"/>
<dbReference type="BioGRID" id="278211">
    <property type="interactions" value="3"/>
</dbReference>
<dbReference type="STRING" id="284812.Q9UUJ0"/>
<dbReference type="GlyCosmos" id="Q9UUJ0">
    <property type="glycosylation" value="2 sites, No reported glycans"/>
</dbReference>
<dbReference type="PaxDb" id="4896-SPAC22F8.02c.1"/>
<dbReference type="EnsemblFungi" id="SPAC22F8.02c.1">
    <property type="protein sequence ID" value="SPAC22F8.02c.1:pep"/>
    <property type="gene ID" value="SPAC22F8.02c"/>
</dbReference>
<dbReference type="GeneID" id="2541716"/>
<dbReference type="KEGG" id="spo:2541716"/>
<dbReference type="PomBase" id="SPAC22F8.02c">
    <property type="gene designation" value="pvg5"/>
</dbReference>
<dbReference type="VEuPathDB" id="FungiDB:SPAC22F8.02c"/>
<dbReference type="HOGENOM" id="CLU_727920_0_0_1"/>
<dbReference type="InParanoid" id="Q9UUJ0"/>
<dbReference type="OMA" id="FITDKFQ"/>
<dbReference type="PRO" id="PR:Q9UUJ0"/>
<dbReference type="Proteomes" id="UP000002485">
    <property type="component" value="Chromosome I"/>
</dbReference>
<dbReference type="GO" id="GO:0000139">
    <property type="term" value="C:Golgi membrane"/>
    <property type="evidence" value="ECO:0007669"/>
    <property type="project" value="UniProtKB-SubCell"/>
</dbReference>
<dbReference type="GO" id="GO:0051072">
    <property type="term" value="P:4,6-pyruvylated galactose residue biosynthetic process"/>
    <property type="evidence" value="ECO:0000315"/>
    <property type="project" value="PomBase"/>
</dbReference>
<dbReference type="GO" id="GO:0071555">
    <property type="term" value="P:cell wall organization"/>
    <property type="evidence" value="ECO:0007669"/>
    <property type="project" value="UniProtKB-KW"/>
</dbReference>
<dbReference type="GO" id="GO:0009272">
    <property type="term" value="P:fungal-type cell wall biogenesis"/>
    <property type="evidence" value="ECO:0000305"/>
    <property type="project" value="PomBase"/>
</dbReference>
<dbReference type="GO" id="GO:0051321">
    <property type="term" value="P:meiotic cell cycle"/>
    <property type="evidence" value="ECO:0007669"/>
    <property type="project" value="UniProtKB-KW"/>
</dbReference>
<feature type="chain" id="PRO_0000076297" description="Pyruvylated Gal-beta-1,3-epitope synthesis protein 5">
    <location>
        <begin position="1"/>
        <end position="372"/>
    </location>
</feature>
<feature type="topological domain" description="Cytoplasmic" evidence="2">
    <location>
        <begin position="1"/>
        <end position="12"/>
    </location>
</feature>
<feature type="transmembrane region" description="Helical; Signal-anchor for type II membrane protein" evidence="2">
    <location>
        <begin position="13"/>
        <end position="35"/>
    </location>
</feature>
<feature type="topological domain" description="Lumenal" evidence="2">
    <location>
        <begin position="36"/>
        <end position="372"/>
    </location>
</feature>
<feature type="glycosylation site" description="N-linked (GlcNAc...) asparagine" evidence="2">
    <location>
        <position position="38"/>
    </location>
</feature>
<feature type="glycosylation site" description="N-linked (GlcNAc...) asparagine" evidence="2">
    <location>
        <position position="128"/>
    </location>
</feature>
<protein>
    <recommendedName>
        <fullName>Pyruvylated Gal-beta-1,3-epitope synthesis protein 5</fullName>
        <shortName>PvGal synthesis protein 5</shortName>
    </recommendedName>
    <alternativeName>
        <fullName>Meiotically up-regulated gene 50 protein</fullName>
    </alternativeName>
</protein>
<proteinExistence type="evidence at protein level"/>
<gene>
    <name type="primary">pvg5</name>
    <name type="synonym">mug50</name>
    <name type="ORF">SPAC22F8.02c</name>
</gene>
<reference key="1">
    <citation type="journal article" date="2002" name="Nature">
        <title>The genome sequence of Schizosaccharomyces pombe.</title>
        <authorList>
            <person name="Wood V."/>
            <person name="Gwilliam R."/>
            <person name="Rajandream M.A."/>
            <person name="Lyne M.H."/>
            <person name="Lyne R."/>
            <person name="Stewart A."/>
            <person name="Sgouros J.G."/>
            <person name="Peat N."/>
            <person name="Hayles J."/>
            <person name="Baker S.G."/>
            <person name="Basham D."/>
            <person name="Bowman S."/>
            <person name="Brooks K."/>
            <person name="Brown D."/>
            <person name="Brown S."/>
            <person name="Chillingworth T."/>
            <person name="Churcher C.M."/>
            <person name="Collins M."/>
            <person name="Connor R."/>
            <person name="Cronin A."/>
            <person name="Davis P."/>
            <person name="Feltwell T."/>
            <person name="Fraser A."/>
            <person name="Gentles S."/>
            <person name="Goble A."/>
            <person name="Hamlin N."/>
            <person name="Harris D.E."/>
            <person name="Hidalgo J."/>
            <person name="Hodgson G."/>
            <person name="Holroyd S."/>
            <person name="Hornsby T."/>
            <person name="Howarth S."/>
            <person name="Huckle E.J."/>
            <person name="Hunt S."/>
            <person name="Jagels K."/>
            <person name="James K.D."/>
            <person name="Jones L."/>
            <person name="Jones M."/>
            <person name="Leather S."/>
            <person name="McDonald S."/>
            <person name="McLean J."/>
            <person name="Mooney P."/>
            <person name="Moule S."/>
            <person name="Mungall K.L."/>
            <person name="Murphy L.D."/>
            <person name="Niblett D."/>
            <person name="Odell C."/>
            <person name="Oliver K."/>
            <person name="O'Neil S."/>
            <person name="Pearson D."/>
            <person name="Quail M.A."/>
            <person name="Rabbinowitsch E."/>
            <person name="Rutherford K.M."/>
            <person name="Rutter S."/>
            <person name="Saunders D."/>
            <person name="Seeger K."/>
            <person name="Sharp S."/>
            <person name="Skelton J."/>
            <person name="Simmonds M.N."/>
            <person name="Squares R."/>
            <person name="Squares S."/>
            <person name="Stevens K."/>
            <person name="Taylor K."/>
            <person name="Taylor R.G."/>
            <person name="Tivey A."/>
            <person name="Walsh S.V."/>
            <person name="Warren T."/>
            <person name="Whitehead S."/>
            <person name="Woodward J.R."/>
            <person name="Volckaert G."/>
            <person name="Aert R."/>
            <person name="Robben J."/>
            <person name="Grymonprez B."/>
            <person name="Weltjens I."/>
            <person name="Vanstreels E."/>
            <person name="Rieger M."/>
            <person name="Schaefer M."/>
            <person name="Mueller-Auer S."/>
            <person name="Gabel C."/>
            <person name="Fuchs M."/>
            <person name="Duesterhoeft A."/>
            <person name="Fritzc C."/>
            <person name="Holzer E."/>
            <person name="Moestl D."/>
            <person name="Hilbert H."/>
            <person name="Borzym K."/>
            <person name="Langer I."/>
            <person name="Beck A."/>
            <person name="Lehrach H."/>
            <person name="Reinhardt R."/>
            <person name="Pohl T.M."/>
            <person name="Eger P."/>
            <person name="Zimmermann W."/>
            <person name="Wedler H."/>
            <person name="Wambutt R."/>
            <person name="Purnelle B."/>
            <person name="Goffeau A."/>
            <person name="Cadieu E."/>
            <person name="Dreano S."/>
            <person name="Gloux S."/>
            <person name="Lelaure V."/>
            <person name="Mottier S."/>
            <person name="Galibert F."/>
            <person name="Aves S.J."/>
            <person name="Xiang Z."/>
            <person name="Hunt C."/>
            <person name="Moore K."/>
            <person name="Hurst S.M."/>
            <person name="Lucas M."/>
            <person name="Rochet M."/>
            <person name="Gaillardin C."/>
            <person name="Tallada V.A."/>
            <person name="Garzon A."/>
            <person name="Thode G."/>
            <person name="Daga R.R."/>
            <person name="Cruzado L."/>
            <person name="Jimenez J."/>
            <person name="Sanchez M."/>
            <person name="del Rey F."/>
            <person name="Benito J."/>
            <person name="Dominguez A."/>
            <person name="Revuelta J.L."/>
            <person name="Moreno S."/>
            <person name="Armstrong J."/>
            <person name="Forsburg S.L."/>
            <person name="Cerutti L."/>
            <person name="Lowe T."/>
            <person name="McCombie W.R."/>
            <person name="Paulsen I."/>
            <person name="Potashkin J."/>
            <person name="Shpakovski G.V."/>
            <person name="Ussery D."/>
            <person name="Barrell B.G."/>
            <person name="Nurse P."/>
        </authorList>
    </citation>
    <scope>NUCLEOTIDE SEQUENCE [LARGE SCALE GENOMIC DNA]</scope>
    <source>
        <strain>972 / ATCC 24843</strain>
    </source>
</reference>
<reference key="2">
    <citation type="journal article" date="2004" name="J. Biol. Chem.">
        <title>Five genes involved in biosynthesis of the pyruvylated Galbeta1,3-epitope in Schizosaccharomyces pombe N-linked glycans.</title>
        <authorList>
            <person name="Andreishcheva E.N."/>
            <person name="Kunkel J.P."/>
            <person name="Gemmill T.R."/>
            <person name="Trimble R.B."/>
        </authorList>
    </citation>
    <scope>FUNCTION</scope>
</reference>
<reference key="3">
    <citation type="journal article" date="2005" name="Curr. Biol.">
        <title>A large-scale screen in S. pombe identifies seven novel genes required for critical meiotic events.</title>
        <authorList>
            <person name="Martin-Castellanos C."/>
            <person name="Blanco M."/>
            <person name="Rozalen A.E."/>
            <person name="Perez-Hidalgo L."/>
            <person name="Garcia A.I."/>
            <person name="Conde F."/>
            <person name="Mata J."/>
            <person name="Ellermeier C."/>
            <person name="Davis L."/>
            <person name="San-Segundo P."/>
            <person name="Smith G.R."/>
            <person name="Moreno S."/>
        </authorList>
    </citation>
    <scope>FUNCTION IN MEIOSIS</scope>
</reference>
<keyword id="KW-0961">Cell wall biogenesis/degradation</keyword>
<keyword id="KW-0325">Glycoprotein</keyword>
<keyword id="KW-0333">Golgi apparatus</keyword>
<keyword id="KW-0469">Meiosis</keyword>
<keyword id="KW-0472">Membrane</keyword>
<keyword id="KW-1185">Reference proteome</keyword>
<keyword id="KW-0735">Signal-anchor</keyword>
<keyword id="KW-0812">Transmembrane</keyword>
<keyword id="KW-1133">Transmembrane helix</keyword>
<evidence type="ECO:0000250" key="1"/>
<evidence type="ECO:0000255" key="2"/>
<evidence type="ECO:0000269" key="3">
    <source>
    </source>
</evidence>
<evidence type="ECO:0000269" key="4">
    <source>
    </source>
</evidence>